<reference key="1">
    <citation type="submission" date="2007-06" db="EMBL/GenBank/DDBJ databases">
        <authorList>
            <consortium name="NIH - Mammalian Gene Collection (MGC) project"/>
        </authorList>
    </citation>
    <scope>NUCLEOTIDE SEQUENCE [LARGE SCALE MRNA]</scope>
    <source>
        <strain>Hereford</strain>
        <tissue>Uterus</tissue>
    </source>
</reference>
<dbReference type="EC" id="5.6.2.3" evidence="2"/>
<dbReference type="EMBL" id="BC147982">
    <property type="protein sequence ID" value="AAI47983.1"/>
    <property type="molecule type" value="mRNA"/>
</dbReference>
<dbReference type="RefSeq" id="NP_001096787.1">
    <property type="nucleotide sequence ID" value="NM_001103317.1"/>
</dbReference>
<dbReference type="SMR" id="A6QLJ0"/>
<dbReference type="FunCoup" id="A6QLJ0">
    <property type="interactions" value="4273"/>
</dbReference>
<dbReference type="STRING" id="9913.ENSBTAP00000061990"/>
<dbReference type="PaxDb" id="9913-ENSBTAP00000002680"/>
<dbReference type="GeneID" id="100125238"/>
<dbReference type="KEGG" id="bta:100125238"/>
<dbReference type="CTD" id="2068"/>
<dbReference type="VEuPathDB" id="HostDB:ENSBTAG00000002072"/>
<dbReference type="eggNOG" id="KOG1131">
    <property type="taxonomic scope" value="Eukaryota"/>
</dbReference>
<dbReference type="InParanoid" id="A6QLJ0"/>
<dbReference type="OrthoDB" id="272481at2759"/>
<dbReference type="Reactome" id="R-BTA-113418">
    <property type="pathway name" value="Formation of the Early Elongation Complex"/>
</dbReference>
<dbReference type="Reactome" id="R-BTA-5696395">
    <property type="pathway name" value="Formation of Incision Complex in GG-NER"/>
</dbReference>
<dbReference type="Reactome" id="R-BTA-5696400">
    <property type="pathway name" value="Dual Incision in GG-NER"/>
</dbReference>
<dbReference type="Reactome" id="R-BTA-674695">
    <property type="pathway name" value="RNA Polymerase II Pre-transcription Events"/>
</dbReference>
<dbReference type="Reactome" id="R-BTA-6781823">
    <property type="pathway name" value="Formation of TC-NER Pre-Incision Complex"/>
</dbReference>
<dbReference type="Reactome" id="R-BTA-6782135">
    <property type="pathway name" value="Dual incision in TC-NER"/>
</dbReference>
<dbReference type="Reactome" id="R-BTA-6782210">
    <property type="pathway name" value="Gap-filling DNA repair synthesis and ligation in TC-NER"/>
</dbReference>
<dbReference type="Reactome" id="R-BTA-6796648">
    <property type="pathway name" value="TP53 Regulates Transcription of DNA Repair Genes"/>
</dbReference>
<dbReference type="Reactome" id="R-BTA-72086">
    <property type="pathway name" value="mRNA Capping"/>
</dbReference>
<dbReference type="Reactome" id="R-BTA-73762">
    <property type="pathway name" value="RNA Polymerase I Transcription Initiation"/>
</dbReference>
<dbReference type="Reactome" id="R-BTA-73772">
    <property type="pathway name" value="RNA Polymerase I Promoter Escape"/>
</dbReference>
<dbReference type="Reactome" id="R-BTA-73776">
    <property type="pathway name" value="RNA Polymerase II Promoter Escape"/>
</dbReference>
<dbReference type="Reactome" id="R-BTA-73779">
    <property type="pathway name" value="RNA Polymerase II Transcription Pre-Initiation And Promoter Opening"/>
</dbReference>
<dbReference type="Reactome" id="R-BTA-73863">
    <property type="pathway name" value="RNA Polymerase I Transcription Termination"/>
</dbReference>
<dbReference type="Reactome" id="R-BTA-75953">
    <property type="pathway name" value="RNA Polymerase II Transcription Initiation"/>
</dbReference>
<dbReference type="Reactome" id="R-BTA-75955">
    <property type="pathway name" value="RNA Polymerase II Transcription Elongation"/>
</dbReference>
<dbReference type="Reactome" id="R-BTA-76042">
    <property type="pathway name" value="RNA Polymerase II Transcription Initiation And Promoter Clearance"/>
</dbReference>
<dbReference type="Reactome" id="R-BTA-77075">
    <property type="pathway name" value="RNA Pol II CTD phosphorylation and interaction with CE"/>
</dbReference>
<dbReference type="Proteomes" id="UP000009136">
    <property type="component" value="Chromosome 18"/>
</dbReference>
<dbReference type="Bgee" id="ENSBTAG00000002072">
    <property type="expression patterns" value="Expressed in retina and 106 other cell types or tissues"/>
</dbReference>
<dbReference type="GO" id="GO:0070516">
    <property type="term" value="C:CAK-ERCC2 complex"/>
    <property type="evidence" value="ECO:0000250"/>
    <property type="project" value="UniProtKB"/>
</dbReference>
<dbReference type="GO" id="GO:0005737">
    <property type="term" value="C:cytoplasm"/>
    <property type="evidence" value="ECO:0000250"/>
    <property type="project" value="UniProtKB"/>
</dbReference>
<dbReference type="GO" id="GO:0071817">
    <property type="term" value="C:MMXD complex"/>
    <property type="evidence" value="ECO:0000250"/>
    <property type="project" value="UniProtKB"/>
</dbReference>
<dbReference type="GO" id="GO:0005634">
    <property type="term" value="C:nucleus"/>
    <property type="evidence" value="ECO:0000250"/>
    <property type="project" value="UniProtKB"/>
</dbReference>
<dbReference type="GO" id="GO:0005819">
    <property type="term" value="C:spindle"/>
    <property type="evidence" value="ECO:0000250"/>
    <property type="project" value="UniProtKB"/>
</dbReference>
<dbReference type="GO" id="GO:0005675">
    <property type="term" value="C:transcription factor TFIIH holo complex"/>
    <property type="evidence" value="ECO:0000250"/>
    <property type="project" value="UniProtKB"/>
</dbReference>
<dbReference type="GO" id="GO:0051539">
    <property type="term" value="F:4 iron, 4 sulfur cluster binding"/>
    <property type="evidence" value="ECO:0007669"/>
    <property type="project" value="UniProtKB-KW"/>
</dbReference>
<dbReference type="GO" id="GO:0043139">
    <property type="term" value="F:5'-3' DNA helicase activity"/>
    <property type="evidence" value="ECO:0000250"/>
    <property type="project" value="UniProtKB"/>
</dbReference>
<dbReference type="GO" id="GO:0005524">
    <property type="term" value="F:ATP binding"/>
    <property type="evidence" value="ECO:0007669"/>
    <property type="project" value="UniProtKB-KW"/>
</dbReference>
<dbReference type="GO" id="GO:0016887">
    <property type="term" value="F:ATP hydrolysis activity"/>
    <property type="evidence" value="ECO:0007669"/>
    <property type="project" value="RHEA"/>
</dbReference>
<dbReference type="GO" id="GO:0003684">
    <property type="term" value="F:damaged DNA binding"/>
    <property type="evidence" value="ECO:0000318"/>
    <property type="project" value="GO_Central"/>
</dbReference>
<dbReference type="GO" id="GO:0003678">
    <property type="term" value="F:DNA helicase activity"/>
    <property type="evidence" value="ECO:0000318"/>
    <property type="project" value="GO_Central"/>
</dbReference>
<dbReference type="GO" id="GO:0046872">
    <property type="term" value="F:metal ion binding"/>
    <property type="evidence" value="ECO:0007669"/>
    <property type="project" value="UniProtKB-KW"/>
</dbReference>
<dbReference type="GO" id="GO:0007059">
    <property type="term" value="P:chromosome segregation"/>
    <property type="evidence" value="ECO:0000250"/>
    <property type="project" value="UniProtKB"/>
</dbReference>
<dbReference type="GO" id="GO:0035315">
    <property type="term" value="P:hair cell differentiation"/>
    <property type="evidence" value="ECO:0000250"/>
    <property type="project" value="UniProtKB"/>
</dbReference>
<dbReference type="GO" id="GO:0006289">
    <property type="term" value="P:nucleotide-excision repair"/>
    <property type="evidence" value="ECO:0000250"/>
    <property type="project" value="UniProtKB"/>
</dbReference>
<dbReference type="GO" id="GO:0045951">
    <property type="term" value="P:positive regulation of mitotic recombination"/>
    <property type="evidence" value="ECO:0000318"/>
    <property type="project" value="GO_Central"/>
</dbReference>
<dbReference type="GO" id="GO:1901990">
    <property type="term" value="P:regulation of mitotic cell cycle phase transition"/>
    <property type="evidence" value="ECO:0000250"/>
    <property type="project" value="UniProtKB"/>
</dbReference>
<dbReference type="GO" id="GO:0006979">
    <property type="term" value="P:response to oxidative stress"/>
    <property type="evidence" value="ECO:0000250"/>
    <property type="project" value="UniProtKB"/>
</dbReference>
<dbReference type="GO" id="GO:0006366">
    <property type="term" value="P:transcription by RNA polymerase II"/>
    <property type="evidence" value="ECO:0000250"/>
    <property type="project" value="UniProtKB"/>
</dbReference>
<dbReference type="GO" id="GO:0006367">
    <property type="term" value="P:transcription initiation at RNA polymerase II promoter"/>
    <property type="evidence" value="ECO:0000250"/>
    <property type="project" value="UniProtKB"/>
</dbReference>
<dbReference type="CDD" id="cd17969">
    <property type="entry name" value="DEAHc_XPD"/>
    <property type="match status" value="1"/>
</dbReference>
<dbReference type="CDD" id="cd18788">
    <property type="entry name" value="SF2_C_XPD"/>
    <property type="match status" value="1"/>
</dbReference>
<dbReference type="FunFam" id="3.40.50.300:FF:000135">
    <property type="entry name" value="DNA repair helicase RAD3, putative"/>
    <property type="match status" value="1"/>
</dbReference>
<dbReference type="FunFam" id="3.40.50.300:FF:000128">
    <property type="entry name" value="Putative DNA repair helicase RAD3"/>
    <property type="match status" value="1"/>
</dbReference>
<dbReference type="FunFam" id="3.40.50.300:FF:000381">
    <property type="entry name" value="TFIIH basal transcription factor complex helicase subunit"/>
    <property type="match status" value="1"/>
</dbReference>
<dbReference type="Gene3D" id="3.40.50.300">
    <property type="entry name" value="P-loop containing nucleotide triphosphate hydrolases"/>
    <property type="match status" value="2"/>
</dbReference>
<dbReference type="InterPro" id="IPR006555">
    <property type="entry name" value="ATP-dep_Helicase_C"/>
</dbReference>
<dbReference type="InterPro" id="IPR045028">
    <property type="entry name" value="DinG/Rad3-like"/>
</dbReference>
<dbReference type="InterPro" id="IPR002464">
    <property type="entry name" value="DNA/RNA_helicase_DEAH_CS"/>
</dbReference>
<dbReference type="InterPro" id="IPR010643">
    <property type="entry name" value="HBB"/>
</dbReference>
<dbReference type="InterPro" id="IPR014013">
    <property type="entry name" value="Helic_SF1/SF2_ATP-bd_DinG/Rad3"/>
</dbReference>
<dbReference type="InterPro" id="IPR006554">
    <property type="entry name" value="Helicase-like_DEXD_c2"/>
</dbReference>
<dbReference type="InterPro" id="IPR027417">
    <property type="entry name" value="P-loop_NTPase"/>
</dbReference>
<dbReference type="InterPro" id="IPR010614">
    <property type="entry name" value="RAD3-like_helicase_DEAD"/>
</dbReference>
<dbReference type="InterPro" id="IPR013020">
    <property type="entry name" value="Rad3/Chl1-like"/>
</dbReference>
<dbReference type="InterPro" id="IPR001945">
    <property type="entry name" value="RAD3/XPD"/>
</dbReference>
<dbReference type="NCBIfam" id="TIGR00604">
    <property type="entry name" value="rad3"/>
    <property type="match status" value="1"/>
</dbReference>
<dbReference type="PANTHER" id="PTHR11472">
    <property type="entry name" value="DNA REPAIR DEAD HELICASE RAD3/XP-D SUBFAMILY MEMBER"/>
    <property type="match status" value="1"/>
</dbReference>
<dbReference type="PANTHER" id="PTHR11472:SF1">
    <property type="entry name" value="GENERAL TRANSCRIPTION AND DNA REPAIR FACTOR IIH HELICASE SUBUNIT XPD"/>
    <property type="match status" value="1"/>
</dbReference>
<dbReference type="Pfam" id="PF06733">
    <property type="entry name" value="DEAD_2"/>
    <property type="match status" value="1"/>
</dbReference>
<dbReference type="Pfam" id="PF06777">
    <property type="entry name" value="HBB"/>
    <property type="match status" value="1"/>
</dbReference>
<dbReference type="Pfam" id="PF13307">
    <property type="entry name" value="Helicase_C_2"/>
    <property type="match status" value="1"/>
</dbReference>
<dbReference type="PRINTS" id="PR00852">
    <property type="entry name" value="XRODRMPGMNTD"/>
</dbReference>
<dbReference type="SMART" id="SM00488">
    <property type="entry name" value="DEXDc2"/>
    <property type="match status" value="1"/>
</dbReference>
<dbReference type="SMART" id="SM00491">
    <property type="entry name" value="HELICc2"/>
    <property type="match status" value="1"/>
</dbReference>
<dbReference type="SUPFAM" id="SSF52540">
    <property type="entry name" value="P-loop containing nucleoside triphosphate hydrolases"/>
    <property type="match status" value="1"/>
</dbReference>
<dbReference type="PROSITE" id="PS00690">
    <property type="entry name" value="DEAH_ATP_HELICASE"/>
    <property type="match status" value="1"/>
</dbReference>
<dbReference type="PROSITE" id="PS51193">
    <property type="entry name" value="HELICASE_ATP_BIND_2"/>
    <property type="match status" value="1"/>
</dbReference>
<accession>A6QLJ0</accession>
<protein>
    <recommendedName>
        <fullName>General transcription and DNA repair factor IIH helicase subunit XPD</fullName>
        <shortName>TFIIH subunit XPD</shortName>
        <ecNumber evidence="2">5.6.2.3</ecNumber>
    </recommendedName>
    <alternativeName>
        <fullName>CXPD</fullName>
    </alternativeName>
    <alternativeName>
        <fullName evidence="5">DNA 5'-3' helicase XPD</fullName>
    </alternativeName>
    <alternativeName>
        <fullName>DNA excision repair protein ERCC-2</fullName>
    </alternativeName>
    <alternativeName>
        <fullName>DNA repair protein complementing XP-D cells</fullName>
    </alternativeName>
    <alternativeName>
        <fullName>Xeroderma pigmentosum group D-complementing protein</fullName>
    </alternativeName>
</protein>
<proteinExistence type="evidence at transcript level"/>
<organism>
    <name type="scientific">Bos taurus</name>
    <name type="common">Bovine</name>
    <dbReference type="NCBI Taxonomy" id="9913"/>
    <lineage>
        <taxon>Eukaryota</taxon>
        <taxon>Metazoa</taxon>
        <taxon>Chordata</taxon>
        <taxon>Craniata</taxon>
        <taxon>Vertebrata</taxon>
        <taxon>Euteleostomi</taxon>
        <taxon>Mammalia</taxon>
        <taxon>Eutheria</taxon>
        <taxon>Laurasiatheria</taxon>
        <taxon>Artiodactyla</taxon>
        <taxon>Ruminantia</taxon>
        <taxon>Pecora</taxon>
        <taxon>Bovidae</taxon>
        <taxon>Bovinae</taxon>
        <taxon>Bos</taxon>
    </lineage>
</organism>
<sequence>MKLNVDGLLVYFPYDYIYPEQFSYMLELKRTLDAKGHGVLEMPSGTGKTVSLLALIMAYQRAYPLEVTKLIYCSRTVPEIEKVIEELRKLLSFYEKQEGEKLPFLGLALSSRKNLCIHPEVTPLRFGKDVDGKCHSLTASYVRAQYQRDSSLPHCRFYEEFDVHGRQVPLPTGIYNLDDLKAVGRRQGWCPYFLARYSILHANVVVYSYHYLLDPKIADLVSKELARKAVVVFDEAHNIDNVCIDSMSVNLTRRTLDRCQANLETLQKTVLRIKETDEQRLREEYRRLVEGLREASAARETDAHLANPVLPDEVLKEAVPGSIRTAEHFLGFLRRLLEYVKWRLRVQHVVQESPPAFLSGLAQRVCIQRKPLRFCAERLRSLLYTLEISDLTDFSPLTLLANFATLVSTYAKGFTIIIEPFDDRTPTIANPILHFSCMDASLAIKPVFERFQSVIITSGTLSPLDIYPKILDFHPVTMATFTMTLARVCLCPMIIGRGNDQVAISSKFETREDIAVIRNYGNLLLEMSAVVPDGIVAFFTSYQYMESTVASWYEQGILENIQRNKLLFIETQDGAETSVALEKYQEACENGRGAILLSVARGKVSEGIDFVHHYGRAVIMFGVPYVYTQSRILKARLEYLRDQFQIRENDFLTFDAMRHAAQCVGRAIRGKTDYGLMVFADKRFARADKRGKLPRWIQEHLTDANLNLTVDEGVQVAKYFLRQMAQPFHREDQLGLSLLSLEQLESEETLRRIEQIAQQL</sequence>
<feature type="chain" id="PRO_0000328564" description="General transcription and DNA repair factor IIH helicase subunit XPD">
    <location>
        <begin position="1"/>
        <end position="760"/>
    </location>
</feature>
<feature type="domain" description="Helicase ATP-binding" evidence="4">
    <location>
        <begin position="7"/>
        <end position="283"/>
    </location>
</feature>
<feature type="region of interest" description="Mediates interaction with MMS19" evidence="1">
    <location>
        <begin position="438"/>
        <end position="637"/>
    </location>
</feature>
<feature type="short sequence motif" description="DEAH box">
    <location>
        <begin position="234"/>
        <end position="237"/>
    </location>
</feature>
<feature type="short sequence motif" description="Nuclear localization signal" evidence="3">
    <location>
        <begin position="682"/>
        <end position="695"/>
    </location>
</feature>
<feature type="binding site" evidence="4">
    <location>
        <begin position="42"/>
        <end position="49"/>
    </location>
    <ligand>
        <name>ATP</name>
        <dbReference type="ChEBI" id="CHEBI:30616"/>
    </ligand>
</feature>
<feature type="binding site" evidence="2">
    <location>
        <position position="116"/>
    </location>
    <ligand>
        <name>[4Fe-4S] cluster</name>
        <dbReference type="ChEBI" id="CHEBI:49883"/>
    </ligand>
</feature>
<feature type="binding site" evidence="2">
    <location>
        <position position="134"/>
    </location>
    <ligand>
        <name>[4Fe-4S] cluster</name>
        <dbReference type="ChEBI" id="CHEBI:49883"/>
    </ligand>
</feature>
<feature type="binding site" evidence="2">
    <location>
        <position position="155"/>
    </location>
    <ligand>
        <name>[4Fe-4S] cluster</name>
        <dbReference type="ChEBI" id="CHEBI:49883"/>
    </ligand>
</feature>
<feature type="binding site" evidence="2">
    <location>
        <position position="190"/>
    </location>
    <ligand>
        <name>[4Fe-4S] cluster</name>
        <dbReference type="ChEBI" id="CHEBI:49883"/>
    </ligand>
</feature>
<gene>
    <name type="primary">ERCC2</name>
</gene>
<evidence type="ECO:0000250" key="1"/>
<evidence type="ECO:0000250" key="2">
    <source>
        <dbReference type="UniProtKB" id="P18074"/>
    </source>
</evidence>
<evidence type="ECO:0000255" key="3"/>
<evidence type="ECO:0000255" key="4">
    <source>
        <dbReference type="PROSITE-ProRule" id="PRU00541"/>
    </source>
</evidence>
<evidence type="ECO:0000305" key="5"/>
<comment type="function">
    <text evidence="2">ATP-dependent 5'-3' DNA helicase, component of the general transcription and DNA repair factor IIH (TFIIH) core complex, which is involved in general and transcription-coupled nucleotide excision repair (NER) of damaged DNA and, when complexed to CDK-activating kinase (CAK), involved in transcription by RNA polymerase II. In NER, TFIIH acts by opening DNA around the lesion to allow the excision of the damaged oligonucleotide and its replacement by a new DNA fragment. The ATP-dependent helicase activity of XPD/ERCC2 is required for DNA opening. In transcription, TFIIH has an essential role in transcription initiation. When the pre-initiation complex (PIC) has been established, TFIIH is required for promoter opening and promoter escape. Phosphorylation of the C-terminal tail (CTD) of the largest subunit of RNA polymerase II by the kinase module CAK controls the initiation of transcription. XPD/ERCC2 acts by forming a bridge between CAK and the core-TFIIH complex. Involved in the regulation of vitamin-D receptor activity. As part of the mitotic spindle-associated MMXD complex it plays a role in chromosome segregation. Might have a role in aging process and could play a causative role in the generation of skin cancers.</text>
</comment>
<comment type="catalytic activity">
    <reaction evidence="2">
        <text>Couples ATP hydrolysis with the unwinding of duplex DNA at the replication fork by translocating in the 5'-3' direction. This creates two antiparallel DNA single strands (ssDNA). The leading ssDNA polymer is the template for DNA polymerase III holoenzyme which synthesizes a continuous strand.</text>
        <dbReference type="EC" id="5.6.2.3"/>
    </reaction>
</comment>
<comment type="catalytic activity">
    <reaction evidence="2">
        <text>ATP + H2O = ADP + phosphate + H(+)</text>
        <dbReference type="Rhea" id="RHEA:13065"/>
        <dbReference type="ChEBI" id="CHEBI:15377"/>
        <dbReference type="ChEBI" id="CHEBI:15378"/>
        <dbReference type="ChEBI" id="CHEBI:30616"/>
        <dbReference type="ChEBI" id="CHEBI:43474"/>
        <dbReference type="ChEBI" id="CHEBI:456216"/>
        <dbReference type="EC" id="5.6.2.3"/>
    </reaction>
</comment>
<comment type="cofactor">
    <cofactor evidence="2">
        <name>Mg(2+)</name>
        <dbReference type="ChEBI" id="CHEBI:18420"/>
    </cofactor>
</comment>
<comment type="cofactor">
    <cofactor evidence="2">
        <name>[4Fe-4S] cluster</name>
        <dbReference type="ChEBI" id="CHEBI:49883"/>
    </cofactor>
    <text evidence="2">Binds 1 [4Fe-4S] cluster.</text>
</comment>
<comment type="subunit">
    <text evidence="2">Component of the 7-subunit TFIIH core complex composed of XPB/ERCC3, XPD/ERCC2, GTF2H1, GTF2H2, GTF2H3, GTF2H4 and GTF2H5, which is active in NER. The core complex associates with the 3-subunit CDK-activating kinase (CAK) module composed of CCNH/cyclin H, CDK7 and MNAT1 to form the 10-subunit holoenzyme (holo-TFIIH) active in transcription. The interaction with GTF2H2 results in the stimulation of the 5'--&gt;3' helicase activity. Component of the MMXD complex, which includes CIAO1, ERCC2, CIAO2B, MMS19 and SLC25A5. Interacts with CIAO1 and CIAO2B; the interaction WITH CIAO2B is direct. Interacts with ATF7IP. Interacts directly with MMS19. Part of TBP-based Pol II pre-initiation complex (PIC), in which Pol II core assembles with general transcription factors and other specific initiation factors including GTF2E1, GTF2E2, GTF2F1, GTF2F2, TCEA1, ERCC2, ERCC3, GTF2H2, GTF2H3, GTF2H4, GTF2H5, GTF2A1, GTF2A2, GTF2B and TBP; this large multi-subunit PIC complex mediates DNA unwinding and targets Pol II core to the transcription start site where the first phosphodiester bond forms.</text>
</comment>
<comment type="subcellular location">
    <subcellularLocation>
        <location evidence="2">Nucleus</location>
    </subcellularLocation>
    <subcellularLocation>
        <location evidence="2">Cytoplasm</location>
        <location evidence="2">Cytoskeleton</location>
        <location evidence="2">Spindle</location>
    </subcellularLocation>
</comment>
<comment type="PTM">
    <text evidence="2">ISGylated.</text>
</comment>
<comment type="similarity">
    <text evidence="5">Belongs to the helicase family. RAD3/XPD subfamily.</text>
</comment>
<name>ERCC2_BOVIN</name>
<keyword id="KW-0004">4Fe-4S</keyword>
<keyword id="KW-0067">ATP-binding</keyword>
<keyword id="KW-0159">Chromosome partition</keyword>
<keyword id="KW-0963">Cytoplasm</keyword>
<keyword id="KW-0206">Cytoskeleton</keyword>
<keyword id="KW-0227">DNA damage</keyword>
<keyword id="KW-0234">DNA repair</keyword>
<keyword id="KW-0238">DNA-binding</keyword>
<keyword id="KW-0347">Helicase</keyword>
<keyword id="KW-0378">Hydrolase</keyword>
<keyword id="KW-0408">Iron</keyword>
<keyword id="KW-0411">Iron-sulfur</keyword>
<keyword id="KW-0413">Isomerase</keyword>
<keyword id="KW-0460">Magnesium</keyword>
<keyword id="KW-0479">Metal-binding</keyword>
<keyword id="KW-0547">Nucleotide-binding</keyword>
<keyword id="KW-0539">Nucleus</keyword>
<keyword id="KW-1185">Reference proteome</keyword>
<keyword id="KW-0804">Transcription</keyword>
<keyword id="KW-0805">Transcription regulation</keyword>
<keyword id="KW-0832">Ubl conjugation</keyword>